<keyword id="KW-1185">Reference proteome</keyword>
<keyword id="KW-0687">Ribonucleoprotein</keyword>
<keyword id="KW-0689">Ribosomal protein</keyword>
<keyword id="KW-0694">RNA-binding</keyword>
<keyword id="KW-0699">rRNA-binding</keyword>
<dbReference type="EMBL" id="CP000930">
    <property type="protein sequence ID" value="ABZ83983.1"/>
    <property type="molecule type" value="Genomic_DNA"/>
</dbReference>
<dbReference type="RefSeq" id="WP_012282499.1">
    <property type="nucleotide sequence ID" value="NC_010337.2"/>
</dbReference>
<dbReference type="SMR" id="B0TC84"/>
<dbReference type="STRING" id="498761.HM1_1406"/>
<dbReference type="KEGG" id="hmo:HM1_1406"/>
<dbReference type="eggNOG" id="COG0522">
    <property type="taxonomic scope" value="Bacteria"/>
</dbReference>
<dbReference type="HOGENOM" id="CLU_092403_0_2_9"/>
<dbReference type="OrthoDB" id="9803672at2"/>
<dbReference type="Proteomes" id="UP000008550">
    <property type="component" value="Chromosome"/>
</dbReference>
<dbReference type="GO" id="GO:0015935">
    <property type="term" value="C:small ribosomal subunit"/>
    <property type="evidence" value="ECO:0007669"/>
    <property type="project" value="InterPro"/>
</dbReference>
<dbReference type="GO" id="GO:0019843">
    <property type="term" value="F:rRNA binding"/>
    <property type="evidence" value="ECO:0007669"/>
    <property type="project" value="UniProtKB-UniRule"/>
</dbReference>
<dbReference type="GO" id="GO:0003735">
    <property type="term" value="F:structural constituent of ribosome"/>
    <property type="evidence" value="ECO:0007669"/>
    <property type="project" value="InterPro"/>
</dbReference>
<dbReference type="GO" id="GO:0042274">
    <property type="term" value="P:ribosomal small subunit biogenesis"/>
    <property type="evidence" value="ECO:0007669"/>
    <property type="project" value="TreeGrafter"/>
</dbReference>
<dbReference type="GO" id="GO:0006412">
    <property type="term" value="P:translation"/>
    <property type="evidence" value="ECO:0007669"/>
    <property type="project" value="UniProtKB-UniRule"/>
</dbReference>
<dbReference type="CDD" id="cd00165">
    <property type="entry name" value="S4"/>
    <property type="match status" value="1"/>
</dbReference>
<dbReference type="FunFam" id="1.10.1050.10:FF:000001">
    <property type="entry name" value="30S ribosomal protein S4"/>
    <property type="match status" value="1"/>
</dbReference>
<dbReference type="FunFam" id="3.10.290.10:FF:000001">
    <property type="entry name" value="30S ribosomal protein S4"/>
    <property type="match status" value="1"/>
</dbReference>
<dbReference type="Gene3D" id="1.10.1050.10">
    <property type="entry name" value="Ribosomal Protein S4 Delta 41, Chain A, domain 1"/>
    <property type="match status" value="1"/>
</dbReference>
<dbReference type="Gene3D" id="3.10.290.10">
    <property type="entry name" value="RNA-binding S4 domain"/>
    <property type="match status" value="1"/>
</dbReference>
<dbReference type="HAMAP" id="MF_01306_B">
    <property type="entry name" value="Ribosomal_uS4_B"/>
    <property type="match status" value="1"/>
</dbReference>
<dbReference type="InterPro" id="IPR022801">
    <property type="entry name" value="Ribosomal_uS4"/>
</dbReference>
<dbReference type="InterPro" id="IPR005709">
    <property type="entry name" value="Ribosomal_uS4_bac-type"/>
</dbReference>
<dbReference type="InterPro" id="IPR018079">
    <property type="entry name" value="Ribosomal_uS4_CS"/>
</dbReference>
<dbReference type="InterPro" id="IPR001912">
    <property type="entry name" value="Ribosomal_uS4_N"/>
</dbReference>
<dbReference type="InterPro" id="IPR002942">
    <property type="entry name" value="S4_RNA-bd"/>
</dbReference>
<dbReference type="InterPro" id="IPR036986">
    <property type="entry name" value="S4_RNA-bd_sf"/>
</dbReference>
<dbReference type="NCBIfam" id="NF003717">
    <property type="entry name" value="PRK05327.1"/>
    <property type="match status" value="1"/>
</dbReference>
<dbReference type="NCBIfam" id="TIGR01017">
    <property type="entry name" value="rpsD_bact"/>
    <property type="match status" value="1"/>
</dbReference>
<dbReference type="PANTHER" id="PTHR11831">
    <property type="entry name" value="30S 40S RIBOSOMAL PROTEIN"/>
    <property type="match status" value="1"/>
</dbReference>
<dbReference type="PANTHER" id="PTHR11831:SF4">
    <property type="entry name" value="SMALL RIBOSOMAL SUBUNIT PROTEIN US4M"/>
    <property type="match status" value="1"/>
</dbReference>
<dbReference type="Pfam" id="PF00163">
    <property type="entry name" value="Ribosomal_S4"/>
    <property type="match status" value="1"/>
</dbReference>
<dbReference type="Pfam" id="PF01479">
    <property type="entry name" value="S4"/>
    <property type="match status" value="1"/>
</dbReference>
<dbReference type="SMART" id="SM01390">
    <property type="entry name" value="Ribosomal_S4"/>
    <property type="match status" value="1"/>
</dbReference>
<dbReference type="SMART" id="SM00363">
    <property type="entry name" value="S4"/>
    <property type="match status" value="1"/>
</dbReference>
<dbReference type="SUPFAM" id="SSF55174">
    <property type="entry name" value="Alpha-L RNA-binding motif"/>
    <property type="match status" value="1"/>
</dbReference>
<dbReference type="PROSITE" id="PS00632">
    <property type="entry name" value="RIBOSOMAL_S4"/>
    <property type="match status" value="1"/>
</dbReference>
<dbReference type="PROSITE" id="PS50889">
    <property type="entry name" value="S4"/>
    <property type="match status" value="1"/>
</dbReference>
<organism>
    <name type="scientific">Heliobacterium modesticaldum (strain ATCC 51547 / Ice1)</name>
    <dbReference type="NCBI Taxonomy" id="498761"/>
    <lineage>
        <taxon>Bacteria</taxon>
        <taxon>Bacillati</taxon>
        <taxon>Bacillota</taxon>
        <taxon>Clostridia</taxon>
        <taxon>Eubacteriales</taxon>
        <taxon>Heliobacteriaceae</taxon>
        <taxon>Heliomicrobium</taxon>
    </lineage>
</organism>
<comment type="function">
    <text evidence="1">One of the primary rRNA binding proteins, it binds directly to 16S rRNA where it nucleates assembly of the body of the 30S subunit.</text>
</comment>
<comment type="function">
    <text evidence="1">With S5 and S12 plays an important role in translational accuracy.</text>
</comment>
<comment type="subunit">
    <text evidence="1">Part of the 30S ribosomal subunit. Contacts protein S5. The interaction surface between S4 and S5 is involved in control of translational fidelity.</text>
</comment>
<comment type="similarity">
    <text evidence="1">Belongs to the universal ribosomal protein uS4 family.</text>
</comment>
<protein>
    <recommendedName>
        <fullName evidence="1">Small ribosomal subunit protein uS4</fullName>
    </recommendedName>
    <alternativeName>
        <fullName evidence="2">30S ribosomal protein S4</fullName>
    </alternativeName>
</protein>
<proteinExistence type="inferred from homology"/>
<name>RS4_HELMI</name>
<gene>
    <name evidence="1" type="primary">rpsD</name>
    <name type="ordered locus">Helmi_13580</name>
    <name type="ORF">HM1_1406</name>
</gene>
<evidence type="ECO:0000255" key="1">
    <source>
        <dbReference type="HAMAP-Rule" id="MF_01306"/>
    </source>
</evidence>
<evidence type="ECO:0000305" key="2"/>
<reference key="1">
    <citation type="journal article" date="2008" name="J. Bacteriol.">
        <title>The genome of Heliobacterium modesticaldum, a phototrophic representative of the Firmicutes containing the simplest photosynthetic apparatus.</title>
        <authorList>
            <person name="Sattley W.M."/>
            <person name="Madigan M.T."/>
            <person name="Swingley W.D."/>
            <person name="Cheung P.C."/>
            <person name="Clocksin K.M."/>
            <person name="Conrad A.L."/>
            <person name="Dejesa L.C."/>
            <person name="Honchak B.M."/>
            <person name="Jung D.O."/>
            <person name="Karbach L.E."/>
            <person name="Kurdoglu A."/>
            <person name="Lahiri S."/>
            <person name="Mastrian S.D."/>
            <person name="Page L.E."/>
            <person name="Taylor H.L."/>
            <person name="Wang Z.T."/>
            <person name="Raymond J."/>
            <person name="Chen M."/>
            <person name="Blankenship R.E."/>
            <person name="Touchman J.W."/>
        </authorList>
    </citation>
    <scope>NUCLEOTIDE SEQUENCE [LARGE SCALE GENOMIC DNA]</scope>
    <source>
        <strain>ATCC 51547 / Ice1</strain>
    </source>
</reference>
<accession>B0TC84</accession>
<feature type="chain" id="PRO_1000140741" description="Small ribosomal subunit protein uS4">
    <location>
        <begin position="1"/>
        <end position="208"/>
    </location>
</feature>
<feature type="domain" description="S4 RNA-binding" evidence="1">
    <location>
        <begin position="98"/>
        <end position="163"/>
    </location>
</feature>
<sequence>MARYTGPVCRLCRREGAKLYLKGERCYTGKCAVDRRTYAPGQHGQGRKKISEYGLQLREKQKARRVYGILEGQFRAYFAEADRQQGVTGENLLRLLETRLDNVVFRLGFARSRNEARQFVLHNHFTLNGKKVNIPSIQLRVGDVIQLKEKSKDTPLFKEIVDGLGQKTPPAWLELDVNTLSGRVIALPKREDIDTNLQEHLIVELYSR</sequence>